<reference key="1">
    <citation type="submission" date="2004-07" db="EMBL/GenBank/DDBJ databases">
        <authorList>
            <consortium name="NIH - Zebrafish Gene Collection (ZGC) project"/>
        </authorList>
    </citation>
    <scope>NUCLEOTIDE SEQUENCE [LARGE SCALE MRNA]</scope>
    <source>
        <tissue>Eye</tissue>
    </source>
</reference>
<keyword id="KW-0963">Cytoplasm</keyword>
<keyword id="KW-1185">Reference proteome</keyword>
<keyword id="KW-0677">Repeat</keyword>
<keyword id="KW-0853">WD repeat</keyword>
<name>WDR83_DANRE</name>
<comment type="function">
    <text evidence="1">Molecular scaffold protein for various multimeric protein complexes. Acts as a module in the assembly of a multicomponent scaffold for the ERK pathway, linking ERK responses to specific agonists. Also involved in response to hypoxia by acting as a negative regulator of HIF1A/HIF-1-alpha (By similarity).</text>
</comment>
<comment type="subcellular location">
    <subcellularLocation>
        <location evidence="1">Cytoplasm</location>
    </subcellularLocation>
</comment>
<comment type="similarity">
    <text evidence="2">Belongs to the WD repeat MORG1 family.</text>
</comment>
<evidence type="ECO:0000250" key="1"/>
<evidence type="ECO:0000305" key="2"/>
<protein>
    <recommendedName>
        <fullName>WD repeat domain-containing protein 83</fullName>
    </recommendedName>
    <alternativeName>
        <fullName>Mitogen-activated protein kinase organizer 1</fullName>
        <shortName>MAPK organizer 1</shortName>
    </alternativeName>
</protein>
<accession>Q6DH44</accession>
<sequence length="315" mass="34795">MAFPQPRPQAPQLPQHLWRTVDCQQGAVRAVRFNADGNYLLTCGSDKSLKLWSVSRGTLLKTYSGHGYEVLDADGSYDNSQLCSCSSDKTVILWDVASGQVTRKLRGHAGKVNCVQFNEEATVMLSGSIDGTVRCWDTRSRRMEPIQILDESQDGISSLKVSEHELLTGSVDGRVRRYDLRMGQLQVDYIGSPITCVCFSRDGQCTLSSSLDSTVRLLDKSTGEMLGEYSGHVNKGYKLDCCLTDKDTHVLSCSEDGHVYYWDLVEGSLTLKLPVGKAVVQSLSFHPTEPRLLTSMEGRVQVWGAEPEDAAENES</sequence>
<feature type="chain" id="PRO_0000235266" description="WD repeat domain-containing protein 83">
    <location>
        <begin position="1"/>
        <end position="315"/>
    </location>
</feature>
<feature type="repeat" description="WD 1">
    <location>
        <begin position="23"/>
        <end position="62"/>
    </location>
</feature>
<feature type="repeat" description="WD 2">
    <location>
        <begin position="65"/>
        <end position="104"/>
    </location>
</feature>
<feature type="repeat" description="WD 3">
    <location>
        <begin position="107"/>
        <end position="146"/>
    </location>
</feature>
<feature type="repeat" description="WD 4">
    <location>
        <begin position="151"/>
        <end position="188"/>
    </location>
</feature>
<feature type="repeat" description="WD 5">
    <location>
        <begin position="189"/>
        <end position="228"/>
    </location>
</feature>
<feature type="repeat" description="WD 6">
    <location>
        <begin position="233"/>
        <end position="272"/>
    </location>
</feature>
<feature type="repeat" description="WD 7">
    <location>
        <begin position="275"/>
        <end position="313"/>
    </location>
</feature>
<organism>
    <name type="scientific">Danio rerio</name>
    <name type="common">Zebrafish</name>
    <name type="synonym">Brachydanio rerio</name>
    <dbReference type="NCBI Taxonomy" id="7955"/>
    <lineage>
        <taxon>Eukaryota</taxon>
        <taxon>Metazoa</taxon>
        <taxon>Chordata</taxon>
        <taxon>Craniata</taxon>
        <taxon>Vertebrata</taxon>
        <taxon>Euteleostomi</taxon>
        <taxon>Actinopterygii</taxon>
        <taxon>Neopterygii</taxon>
        <taxon>Teleostei</taxon>
        <taxon>Ostariophysi</taxon>
        <taxon>Cypriniformes</taxon>
        <taxon>Danionidae</taxon>
        <taxon>Danioninae</taxon>
        <taxon>Danio</taxon>
    </lineage>
</organism>
<dbReference type="EMBL" id="BC076138">
    <property type="protein sequence ID" value="AAH76138.1"/>
    <property type="molecule type" value="mRNA"/>
</dbReference>
<dbReference type="RefSeq" id="NP_001002429.1">
    <property type="nucleotide sequence ID" value="NM_001002429.1"/>
</dbReference>
<dbReference type="SMR" id="Q6DH44"/>
<dbReference type="FunCoup" id="Q6DH44">
    <property type="interactions" value="997"/>
</dbReference>
<dbReference type="STRING" id="7955.ENSDARP00000060977"/>
<dbReference type="PaxDb" id="7955-ENSDARP00000060977"/>
<dbReference type="GeneID" id="436702"/>
<dbReference type="KEGG" id="dre:436702"/>
<dbReference type="AGR" id="ZFIN:ZDB-GENE-040718-126"/>
<dbReference type="CTD" id="84292"/>
<dbReference type="ZFIN" id="ZDB-GENE-040718-126">
    <property type="gene designation" value="wdr83"/>
</dbReference>
<dbReference type="eggNOG" id="KOG0316">
    <property type="taxonomic scope" value="Eukaryota"/>
</dbReference>
<dbReference type="InParanoid" id="Q6DH44"/>
<dbReference type="OrthoDB" id="71437at2759"/>
<dbReference type="PhylomeDB" id="Q6DH44"/>
<dbReference type="Reactome" id="R-DRE-5674135">
    <property type="pathway name" value="MAP2K and MAPK activation"/>
</dbReference>
<dbReference type="PRO" id="PR:Q6DH44"/>
<dbReference type="Proteomes" id="UP000000437">
    <property type="component" value="Alternate scaffold 22"/>
</dbReference>
<dbReference type="Proteomes" id="UP000000437">
    <property type="component" value="Chromosome 22"/>
</dbReference>
<dbReference type="GO" id="GO:0071013">
    <property type="term" value="C:catalytic step 2 spliceosome"/>
    <property type="evidence" value="ECO:0000318"/>
    <property type="project" value="GO_Central"/>
</dbReference>
<dbReference type="GO" id="GO:0005737">
    <property type="term" value="C:cytoplasm"/>
    <property type="evidence" value="ECO:0007669"/>
    <property type="project" value="UniProtKB-SubCell"/>
</dbReference>
<dbReference type="GO" id="GO:0000398">
    <property type="term" value="P:mRNA splicing, via spliceosome"/>
    <property type="evidence" value="ECO:0000318"/>
    <property type="project" value="GO_Central"/>
</dbReference>
<dbReference type="CDD" id="cd00200">
    <property type="entry name" value="WD40"/>
    <property type="match status" value="1"/>
</dbReference>
<dbReference type="FunFam" id="2.130.10.10:FF:000273">
    <property type="entry name" value="WD repeat domain-containing protein 83"/>
    <property type="match status" value="1"/>
</dbReference>
<dbReference type="Gene3D" id="2.130.10.10">
    <property type="entry name" value="YVTN repeat-like/Quinoprotein amine dehydrogenase"/>
    <property type="match status" value="1"/>
</dbReference>
<dbReference type="InterPro" id="IPR020472">
    <property type="entry name" value="G-protein_beta_WD-40_rep"/>
</dbReference>
<dbReference type="InterPro" id="IPR015943">
    <property type="entry name" value="WD40/YVTN_repeat-like_dom_sf"/>
</dbReference>
<dbReference type="InterPro" id="IPR019775">
    <property type="entry name" value="WD40_repeat_CS"/>
</dbReference>
<dbReference type="InterPro" id="IPR036322">
    <property type="entry name" value="WD40_repeat_dom_sf"/>
</dbReference>
<dbReference type="InterPro" id="IPR001680">
    <property type="entry name" value="WD40_rpt"/>
</dbReference>
<dbReference type="InterPro" id="IPR051980">
    <property type="entry name" value="WD_repeat_MORG1"/>
</dbReference>
<dbReference type="PANTHER" id="PTHR22842:SF3">
    <property type="entry name" value="WD REPEAT DOMAIN-CONTAINING PROTEIN 83"/>
    <property type="match status" value="1"/>
</dbReference>
<dbReference type="PANTHER" id="PTHR22842">
    <property type="entry name" value="WD40 REPEAT PROTEIN"/>
    <property type="match status" value="1"/>
</dbReference>
<dbReference type="Pfam" id="PF00400">
    <property type="entry name" value="WD40"/>
    <property type="match status" value="5"/>
</dbReference>
<dbReference type="PRINTS" id="PR00320">
    <property type="entry name" value="GPROTEINBRPT"/>
</dbReference>
<dbReference type="SMART" id="SM00320">
    <property type="entry name" value="WD40"/>
    <property type="match status" value="7"/>
</dbReference>
<dbReference type="SUPFAM" id="SSF50978">
    <property type="entry name" value="WD40 repeat-like"/>
    <property type="match status" value="1"/>
</dbReference>
<dbReference type="PROSITE" id="PS00678">
    <property type="entry name" value="WD_REPEATS_1"/>
    <property type="match status" value="1"/>
</dbReference>
<dbReference type="PROSITE" id="PS50082">
    <property type="entry name" value="WD_REPEATS_2"/>
    <property type="match status" value="3"/>
</dbReference>
<dbReference type="PROSITE" id="PS50294">
    <property type="entry name" value="WD_REPEATS_REGION"/>
    <property type="match status" value="1"/>
</dbReference>
<gene>
    <name type="primary">wdr83</name>
    <name type="synonym">morg1</name>
    <name type="ORF">zgc:92654</name>
</gene>
<proteinExistence type="evidence at transcript level"/>